<feature type="chain" id="PRO_1000023227" description="Thymidylate kinase">
    <location>
        <begin position="1"/>
        <end position="213"/>
    </location>
</feature>
<feature type="binding site" evidence="1">
    <location>
        <begin position="7"/>
        <end position="14"/>
    </location>
    <ligand>
        <name>ATP</name>
        <dbReference type="ChEBI" id="CHEBI:30616"/>
    </ligand>
</feature>
<sequence>MFITFEGMDGSGKTTALLKVKEELERLNYKVLITREPGGEVIAEQIRQIILDNKNKDMDAWTEALLFIASRNQHLQKVIKPALEKNIIVISDRFIDSTSAYQGSARNIGVDVVSEVQQIVLKNCLPDLTLFFDVSFSEAEKRMQIRGESSKNRLDKEENNFKQKVYQGYLELVKNNPKRIKVIDANKDIDQVYNQAIKIILEKLKENEKRTSN</sequence>
<dbReference type="EC" id="2.7.4.9" evidence="1"/>
<dbReference type="EMBL" id="CP000123">
    <property type="protein sequence ID" value="ABC01235.1"/>
    <property type="molecule type" value="Genomic_DNA"/>
</dbReference>
<dbReference type="RefSeq" id="WP_011386914.1">
    <property type="nucleotide sequence ID" value="NC_007633.1"/>
</dbReference>
<dbReference type="SMR" id="Q2STA4"/>
<dbReference type="GeneID" id="23779034"/>
<dbReference type="KEGG" id="mcp:MCAP_0010"/>
<dbReference type="HOGENOM" id="CLU_049131_0_2_14"/>
<dbReference type="PhylomeDB" id="Q2STA4"/>
<dbReference type="Proteomes" id="UP000001928">
    <property type="component" value="Chromosome"/>
</dbReference>
<dbReference type="GO" id="GO:0005829">
    <property type="term" value="C:cytosol"/>
    <property type="evidence" value="ECO:0007669"/>
    <property type="project" value="TreeGrafter"/>
</dbReference>
<dbReference type="GO" id="GO:0005524">
    <property type="term" value="F:ATP binding"/>
    <property type="evidence" value="ECO:0007669"/>
    <property type="project" value="UniProtKB-UniRule"/>
</dbReference>
<dbReference type="GO" id="GO:0004798">
    <property type="term" value="F:dTMP kinase activity"/>
    <property type="evidence" value="ECO:0007669"/>
    <property type="project" value="UniProtKB-UniRule"/>
</dbReference>
<dbReference type="GO" id="GO:0006233">
    <property type="term" value="P:dTDP biosynthetic process"/>
    <property type="evidence" value="ECO:0007669"/>
    <property type="project" value="InterPro"/>
</dbReference>
<dbReference type="GO" id="GO:0006235">
    <property type="term" value="P:dTTP biosynthetic process"/>
    <property type="evidence" value="ECO:0007669"/>
    <property type="project" value="UniProtKB-UniRule"/>
</dbReference>
<dbReference type="GO" id="GO:0006227">
    <property type="term" value="P:dUDP biosynthetic process"/>
    <property type="evidence" value="ECO:0007669"/>
    <property type="project" value="TreeGrafter"/>
</dbReference>
<dbReference type="CDD" id="cd01672">
    <property type="entry name" value="TMPK"/>
    <property type="match status" value="1"/>
</dbReference>
<dbReference type="FunFam" id="3.40.50.300:FF:000225">
    <property type="entry name" value="Thymidylate kinase"/>
    <property type="match status" value="1"/>
</dbReference>
<dbReference type="Gene3D" id="3.40.50.300">
    <property type="entry name" value="P-loop containing nucleotide triphosphate hydrolases"/>
    <property type="match status" value="1"/>
</dbReference>
<dbReference type="HAMAP" id="MF_00165">
    <property type="entry name" value="Thymidylate_kinase"/>
    <property type="match status" value="1"/>
</dbReference>
<dbReference type="InterPro" id="IPR027417">
    <property type="entry name" value="P-loop_NTPase"/>
</dbReference>
<dbReference type="InterPro" id="IPR039430">
    <property type="entry name" value="Thymidylate_kin-like_dom"/>
</dbReference>
<dbReference type="InterPro" id="IPR018095">
    <property type="entry name" value="Thymidylate_kin_CS"/>
</dbReference>
<dbReference type="InterPro" id="IPR018094">
    <property type="entry name" value="Thymidylate_kinase"/>
</dbReference>
<dbReference type="NCBIfam" id="TIGR00041">
    <property type="entry name" value="DTMP_kinase"/>
    <property type="match status" value="1"/>
</dbReference>
<dbReference type="PANTHER" id="PTHR10344">
    <property type="entry name" value="THYMIDYLATE KINASE"/>
    <property type="match status" value="1"/>
</dbReference>
<dbReference type="PANTHER" id="PTHR10344:SF4">
    <property type="entry name" value="UMP-CMP KINASE 2, MITOCHONDRIAL"/>
    <property type="match status" value="1"/>
</dbReference>
<dbReference type="Pfam" id="PF02223">
    <property type="entry name" value="Thymidylate_kin"/>
    <property type="match status" value="1"/>
</dbReference>
<dbReference type="SUPFAM" id="SSF52540">
    <property type="entry name" value="P-loop containing nucleoside triphosphate hydrolases"/>
    <property type="match status" value="1"/>
</dbReference>
<dbReference type="PROSITE" id="PS01331">
    <property type="entry name" value="THYMIDYLATE_KINASE"/>
    <property type="match status" value="1"/>
</dbReference>
<protein>
    <recommendedName>
        <fullName evidence="1">Thymidylate kinase</fullName>
        <ecNumber evidence="1">2.7.4.9</ecNumber>
    </recommendedName>
    <alternativeName>
        <fullName evidence="1">dTMP kinase</fullName>
    </alternativeName>
</protein>
<comment type="function">
    <text evidence="1">Phosphorylation of dTMP to form dTDP in both de novo and salvage pathways of dTTP synthesis.</text>
</comment>
<comment type="catalytic activity">
    <reaction evidence="1">
        <text>dTMP + ATP = dTDP + ADP</text>
        <dbReference type="Rhea" id="RHEA:13517"/>
        <dbReference type="ChEBI" id="CHEBI:30616"/>
        <dbReference type="ChEBI" id="CHEBI:58369"/>
        <dbReference type="ChEBI" id="CHEBI:63528"/>
        <dbReference type="ChEBI" id="CHEBI:456216"/>
        <dbReference type="EC" id="2.7.4.9"/>
    </reaction>
</comment>
<comment type="similarity">
    <text evidence="1">Belongs to the thymidylate kinase family.</text>
</comment>
<accession>Q2STA4</accession>
<gene>
    <name evidence="1" type="primary">tmk</name>
    <name type="ordered locus">MCAP_0010</name>
</gene>
<reference key="1">
    <citation type="submission" date="2005-09" db="EMBL/GenBank/DDBJ databases">
        <authorList>
            <person name="Glass J.I."/>
            <person name="Lartigue C."/>
            <person name="Pfannkoch C."/>
            <person name="Baden-Tillson H."/>
            <person name="Smith H.O."/>
            <person name="Venter J.C."/>
            <person name="Roske K."/>
            <person name="Wise K.S."/>
            <person name="Calcutt M.J."/>
            <person name="Nelson W.C."/>
            <person name="Nierman W.C."/>
        </authorList>
    </citation>
    <scope>NUCLEOTIDE SEQUENCE [LARGE SCALE GENOMIC DNA]</scope>
    <source>
        <strain>California kid / ATCC 27343 / NCTC 10154</strain>
    </source>
</reference>
<evidence type="ECO:0000255" key="1">
    <source>
        <dbReference type="HAMAP-Rule" id="MF_00165"/>
    </source>
</evidence>
<organism>
    <name type="scientific">Mycoplasma capricolum subsp. capricolum (strain California kid / ATCC 27343 / NCTC 10154)</name>
    <dbReference type="NCBI Taxonomy" id="340047"/>
    <lineage>
        <taxon>Bacteria</taxon>
        <taxon>Bacillati</taxon>
        <taxon>Mycoplasmatota</taxon>
        <taxon>Mollicutes</taxon>
        <taxon>Mycoplasmataceae</taxon>
        <taxon>Mycoplasma</taxon>
    </lineage>
</organism>
<keyword id="KW-0067">ATP-binding</keyword>
<keyword id="KW-0418">Kinase</keyword>
<keyword id="KW-0545">Nucleotide biosynthesis</keyword>
<keyword id="KW-0547">Nucleotide-binding</keyword>
<keyword id="KW-0808">Transferase</keyword>
<name>KTHY_MYCCT</name>
<proteinExistence type="inferred from homology"/>